<proteinExistence type="evidence at protein level"/>
<evidence type="ECO:0000255" key="1">
    <source>
        <dbReference type="HAMAP-Rule" id="MF_01534"/>
    </source>
</evidence>
<evidence type="ECO:0000269" key="2">
    <source>
    </source>
</evidence>
<evidence type="ECO:0000269" key="3">
    <source>
    </source>
</evidence>
<evidence type="ECO:0000269" key="4">
    <source>
    </source>
</evidence>
<evidence type="ECO:0000305" key="5"/>
<feature type="chain" id="PRO_0000194563" description="HTH-type transcriptional activator RhaS">
    <location>
        <begin position="1"/>
        <end position="278"/>
    </location>
</feature>
<feature type="domain" description="HTH araC/xylS-type" evidence="1">
    <location>
        <begin position="174"/>
        <end position="272"/>
    </location>
</feature>
<feature type="DNA-binding region" description="H-T-H motif" evidence="1">
    <location>
        <begin position="191"/>
        <end position="212"/>
    </location>
</feature>
<feature type="DNA-binding region" description="H-T-H motif" evidence="1">
    <location>
        <begin position="239"/>
        <end position="262"/>
    </location>
</feature>
<feature type="site" description="Interaction with sigma-70" evidence="1">
    <location>
        <position position="241"/>
    </location>
</feature>
<feature type="site" description="Interaction with sigma-70" evidence="1">
    <location>
        <position position="250"/>
    </location>
</feature>
<feature type="mutagenesis site" description="48% of wild-type activity." evidence="2">
    <original>L</original>
    <variation>A</variation>
    <location>
        <position position="201"/>
    </location>
</feature>
<feature type="mutagenesis site" description="4% of wild-type activity." evidence="2">
    <original>R</original>
    <variation>A</variation>
    <location>
        <position position="202"/>
    </location>
</feature>
<feature type="mutagenesis site" description="28% of wild-type activity." evidence="2">
    <original>H</original>
    <variation>A</variation>
    <location>
        <position position="205"/>
    </location>
</feature>
<feature type="mutagenesis site" description="0.1% of wild-type activity." evidence="2">
    <original>R</original>
    <variation>A</variation>
    <location>
        <position position="206"/>
    </location>
</feature>
<feature type="mutagenesis site" description="66% of wild-type activity." evidence="2">
    <original>C</original>
    <variation>A</variation>
    <location>
        <position position="246"/>
    </location>
</feature>
<feature type="mutagenesis site" description="6.2% of wild-type activity." evidence="2">
    <original>G</original>
    <variation>A</variation>
    <location>
        <position position="247"/>
    </location>
</feature>
<feature type="mutagenesis site" description="0.9% of wild-type activity." evidence="2">
    <original>G</original>
    <variation>R</variation>
    <location>
        <position position="247"/>
    </location>
</feature>
<feature type="mutagenesis site" description="0.9% of wild-type activity." evidence="2">
    <original>F</original>
    <variation>A</variation>
    <location>
        <position position="248"/>
    </location>
</feature>
<feature type="mutagenesis site" description="3.3% of wild-type activity." evidence="2">
    <original>F</original>
    <variation>V</variation>
    <location>
        <position position="248"/>
    </location>
</feature>
<feature type="mutagenesis site" description="93% of wild-type activity." evidence="2">
    <original>S</original>
    <variation>G</variation>
    <location>
        <position position="249"/>
    </location>
</feature>
<feature type="mutagenesis site" description="8.3% of wild-type activity." evidence="2">
    <original>D</original>
    <variation>A</variation>
    <location>
        <position position="250"/>
    </location>
</feature>
<feature type="mutagenesis site" description="87% of wild-type activity." evidence="2">
    <original>S</original>
    <variation>G</variation>
    <location>
        <position position="251"/>
    </location>
</feature>
<feature type="mutagenesis site" description="31% of wild-type activity." evidence="2">
    <original>N</original>
    <variation>A</variation>
    <location>
        <position position="252"/>
    </location>
</feature>
<feature type="mutagenesis site" description="0.4% of wild-type activity." evidence="2">
    <original>N</original>
    <variation>H</variation>
    <location>
        <position position="252"/>
    </location>
</feature>
<feature type="mutagenesis site" description="0.3% of wild-type activity." evidence="2">
    <original>N</original>
    <variation>I</variation>
    <location>
        <position position="252"/>
    </location>
</feature>
<feature type="mutagenesis site" description="37% of wild-type activity." evidence="2">
    <original>N</original>
    <variation>S</variation>
    <location>
        <position position="252"/>
    </location>
</feature>
<feature type="mutagenesis site" description="48% of wild-type activity." evidence="2">
    <original>H</original>
    <variation>A</variation>
    <location>
        <position position="253"/>
    </location>
</feature>
<feature type="mutagenesis site" description="32% of wild-type activity." evidence="2">
    <original>H</original>
    <variation>Q</variation>
    <location>
        <position position="253"/>
    </location>
</feature>
<feature type="mutagenesis site" description="1.2% of wild-type activity." evidence="2">
    <original>F</original>
    <variation>A</variation>
    <location>
        <position position="254"/>
    </location>
</feature>
<feature type="mutagenesis site" description="80% of wild-type activity." evidence="2">
    <original>S</original>
    <variation>A</variation>
    <location>
        <position position="255"/>
    </location>
</feature>
<feature type="mutagenesis site" description="61% of wild-type activity." evidence="2">
    <original>T</original>
    <variation>A</variation>
    <location>
        <position position="256"/>
    </location>
</feature>
<name>RHAS_ECOLI</name>
<reference key="1">
    <citation type="journal article" date="1987" name="J. Mol. Biol.">
        <title>Positive regulation of the Escherichia coli L-rhamnose operon is mediated by the products of tandemly repeated regulatory genes.</title>
        <authorList>
            <person name="Tobin J.F."/>
            <person name="Schleif R.F."/>
        </authorList>
    </citation>
    <scope>NUCLEOTIDE SEQUENCE [GENOMIC DNA]</scope>
</reference>
<reference key="2">
    <citation type="journal article" date="1993" name="Nucleic Acids Res.">
        <title>Analysis of the Escherichia coli genome. III. DNA sequence of the region from 87.2 to 89.2 minutes.</title>
        <authorList>
            <person name="Plunkett G. III"/>
            <person name="Burland V."/>
            <person name="Daniels D.L."/>
            <person name="Blattner F.R."/>
        </authorList>
    </citation>
    <scope>NUCLEOTIDE SEQUENCE [LARGE SCALE GENOMIC DNA]</scope>
    <source>
        <strain>K12 / MG1655 / ATCC 47076</strain>
    </source>
</reference>
<reference key="3">
    <citation type="journal article" date="1997" name="Science">
        <title>The complete genome sequence of Escherichia coli K-12.</title>
        <authorList>
            <person name="Blattner F.R."/>
            <person name="Plunkett G. III"/>
            <person name="Bloch C.A."/>
            <person name="Perna N.T."/>
            <person name="Burland V."/>
            <person name="Riley M."/>
            <person name="Collado-Vides J."/>
            <person name="Glasner J.D."/>
            <person name="Rode C.K."/>
            <person name="Mayhew G.F."/>
            <person name="Gregor J."/>
            <person name="Davis N.W."/>
            <person name="Kirkpatrick H.A."/>
            <person name="Goeden M.A."/>
            <person name="Rose D.J."/>
            <person name="Mau B."/>
            <person name="Shao Y."/>
        </authorList>
    </citation>
    <scope>NUCLEOTIDE SEQUENCE [LARGE SCALE GENOMIC DNA]</scope>
    <source>
        <strain>K12 / MG1655 / ATCC 47076</strain>
    </source>
</reference>
<reference key="4">
    <citation type="journal article" date="2006" name="Mol. Syst. Biol.">
        <title>Highly accurate genome sequences of Escherichia coli K-12 strains MG1655 and W3110.</title>
        <authorList>
            <person name="Hayashi K."/>
            <person name="Morooka N."/>
            <person name="Yamamoto Y."/>
            <person name="Fujita K."/>
            <person name="Isono K."/>
            <person name="Choi S."/>
            <person name="Ohtsubo E."/>
            <person name="Baba T."/>
            <person name="Wanner B.L."/>
            <person name="Mori H."/>
            <person name="Horiuchi T."/>
        </authorList>
    </citation>
    <scope>NUCLEOTIDE SEQUENCE [LARGE SCALE GENOMIC DNA]</scope>
    <source>
        <strain>K12 / W3110 / ATCC 27325 / DSM 5911</strain>
    </source>
</reference>
<reference key="5">
    <citation type="journal article" date="1993" name="J. Mol. Biol.">
        <title>A regulatory cascade in the induction of rhaBAD.</title>
        <authorList>
            <person name="Egan S.M."/>
            <person name="Schleif R.F."/>
        </authorList>
    </citation>
    <scope>FUNCTION</scope>
    <scope>INDUCTION</scope>
    <source>
        <strain>ECL116</strain>
    </source>
</reference>
<reference key="6">
    <citation type="journal article" date="1996" name="Microbiology">
        <title>Transcriptional regulation of the Escherichia coli rhaT gene.</title>
        <authorList>
            <person name="Via P."/>
            <person name="Badia J."/>
            <person name="Baldoma L."/>
            <person name="Obradors N."/>
            <person name="Aguilar J."/>
        </authorList>
    </citation>
    <scope>FUNCTION</scope>
</reference>
<reference key="7">
    <citation type="journal article" date="1999" name="J. Bacteriol.">
        <title>Amino acid-DNA contacts by RhaS: an AraC family transcription activator.</title>
        <authorList>
            <person name="Bhende P.M."/>
            <person name="Egan S.M."/>
        </authorList>
    </citation>
    <scope>DNA-BINDING</scope>
    <scope>MUTAGENESIS OF LEU-201; ARG-202; HIS-205; ARG-206; CYS-246; GLY-247; PHE-248; SER-249; ASP-250; SER-251; ASN-252; HIS-253; PHE-254; SER-255 AND THR-256</scope>
    <source>
        <strain>ECL116</strain>
    </source>
</reference>
<reference key="8">
    <citation type="journal article" date="2000" name="J. Bacteriol.">
        <title>Genetic evidence that transcription activation by RhaS involves specific amino acid contacts with sigma 70.</title>
        <authorList>
            <person name="Bhende P.M."/>
            <person name="Egan S.M."/>
        </authorList>
    </citation>
    <scope>INTERACTION WITH SIGMA-70</scope>
    <source>
        <strain>ECL116</strain>
    </source>
</reference>
<reference key="9">
    <citation type="journal article" date="2000" name="J. Bacteriol.">
        <title>Interdependence of activation at rhaSR by cyclic AMP receptor protein, the RNA polymerase alpha subunit C-terminal domain, and rhaR.</title>
        <authorList>
            <person name="Holcroft C.C."/>
            <person name="Egan S.M."/>
        </authorList>
    </citation>
    <scope>REGULATION BY CRP</scope>
</reference>
<reference key="10">
    <citation type="journal article" date="2004" name="J. Bacteriol.">
        <title>Amino acid contacts between sigma 70 domain 4 and the transcription activators RhaS and RhaR.</title>
        <authorList>
            <person name="Wickstrum J.R."/>
            <person name="Egan S.M."/>
        </authorList>
    </citation>
    <scope>INTERACTION WITH SIGMA-70</scope>
</reference>
<gene>
    <name evidence="1" type="primary">rhaS</name>
    <name type="synonym">rhaC2</name>
    <name type="ordered locus">b3905</name>
    <name type="ordered locus">JW3876</name>
</gene>
<sequence>MTVLHSVDFFPSGNASVAIEPRLPQADFPEHHHDFHEIVIVEHGTGIHVFNGQPYTITGGTVCFVRDHDRHLYEHTDNLCLTNVLYRSPDRFQFLAGLNQLLPQELDGQYPSHWRVNHSVLQQVRQLVAQMEQQEGENDLPSTASREILFMQLLLLLRKSSLQENLENSASRLNLLLAWLEDHFADEVNWDAVADQFSLSLRTLHRQLKQQTGLTPQRYLNRLRLMKARHLLRHSEASVTDIAYRCGFSDSNHFSTLFRREFNWSPRDIRQGRDGFLQ</sequence>
<keyword id="KW-0010">Activator</keyword>
<keyword id="KW-0963">Cytoplasm</keyword>
<keyword id="KW-0238">DNA-binding</keyword>
<keyword id="KW-1185">Reference proteome</keyword>
<keyword id="KW-0677">Repeat</keyword>
<keyword id="KW-0684">Rhamnose metabolism</keyword>
<keyword id="KW-0804">Transcription</keyword>
<keyword id="KW-0805">Transcription regulation</keyword>
<accession>P09377</accession>
<accession>Q2M8K2</accession>
<comment type="function">
    <text evidence="1 3 4">Activates expression of the rhaBAD and rhaT operons.</text>
</comment>
<comment type="subunit">
    <text evidence="1 5">Binds DNA as a dimer.</text>
</comment>
<comment type="subcellular location">
    <subcellularLocation>
        <location evidence="1">Cytoplasm</location>
    </subcellularLocation>
</comment>
<comment type="induction">
    <text evidence="3">Induced by RhaR in response to L-rhamnose. Binding of the cAMP receptor protein (CRP) is required for full expression.</text>
</comment>
<protein>
    <recommendedName>
        <fullName evidence="1">HTH-type transcriptional activator RhaS</fullName>
    </recommendedName>
    <alternativeName>
        <fullName evidence="1">L-rhamnose operon regulatory protein RhaS</fullName>
    </alternativeName>
</protein>
<dbReference type="EMBL" id="X06058">
    <property type="protein sequence ID" value="CAA29452.1"/>
    <property type="molecule type" value="Genomic_DNA"/>
</dbReference>
<dbReference type="EMBL" id="L19201">
    <property type="protein sequence ID" value="AAB03038.1"/>
    <property type="molecule type" value="Genomic_DNA"/>
</dbReference>
<dbReference type="EMBL" id="U00096">
    <property type="protein sequence ID" value="AAC76887.1"/>
    <property type="molecule type" value="Genomic_DNA"/>
</dbReference>
<dbReference type="EMBL" id="AP009048">
    <property type="protein sequence ID" value="BAE77404.1"/>
    <property type="molecule type" value="Genomic_DNA"/>
</dbReference>
<dbReference type="PIR" id="S40849">
    <property type="entry name" value="S40849"/>
</dbReference>
<dbReference type="RefSeq" id="NP_418341.1">
    <property type="nucleotide sequence ID" value="NC_000913.3"/>
</dbReference>
<dbReference type="RefSeq" id="WP_000217137.1">
    <property type="nucleotide sequence ID" value="NZ_SSZK01000014.1"/>
</dbReference>
<dbReference type="SMR" id="P09377"/>
<dbReference type="BioGRID" id="4260998">
    <property type="interactions" value="123"/>
</dbReference>
<dbReference type="BioGRID" id="852694">
    <property type="interactions" value="5"/>
</dbReference>
<dbReference type="DIP" id="DIP-10694N"/>
<dbReference type="FunCoup" id="P09377">
    <property type="interactions" value="370"/>
</dbReference>
<dbReference type="IntAct" id="P09377">
    <property type="interactions" value="24"/>
</dbReference>
<dbReference type="STRING" id="511145.b3905"/>
<dbReference type="PaxDb" id="511145-b3905"/>
<dbReference type="EnsemblBacteria" id="AAC76887">
    <property type="protein sequence ID" value="AAC76887"/>
    <property type="gene ID" value="b3905"/>
</dbReference>
<dbReference type="GeneID" id="75204579"/>
<dbReference type="GeneID" id="948397"/>
<dbReference type="KEGG" id="ecj:JW3876"/>
<dbReference type="KEGG" id="eco:b3905"/>
<dbReference type="KEGG" id="ecoc:C3026_21115"/>
<dbReference type="PATRIC" id="fig|1411691.4.peg.2800"/>
<dbReference type="EchoBASE" id="EB0836"/>
<dbReference type="eggNOG" id="COG4977">
    <property type="taxonomic scope" value="Bacteria"/>
</dbReference>
<dbReference type="HOGENOM" id="CLU_000445_88_5_6"/>
<dbReference type="InParanoid" id="P09377"/>
<dbReference type="OMA" id="GHYPSHW"/>
<dbReference type="OrthoDB" id="2547276at2"/>
<dbReference type="PhylomeDB" id="P09377"/>
<dbReference type="BioCyc" id="EcoCyc:PD00221"/>
<dbReference type="PRO" id="PR:P09377"/>
<dbReference type="Proteomes" id="UP000000625">
    <property type="component" value="Chromosome"/>
</dbReference>
<dbReference type="GO" id="GO:0005737">
    <property type="term" value="C:cytoplasm"/>
    <property type="evidence" value="ECO:0007669"/>
    <property type="project" value="UniProtKB-SubCell"/>
</dbReference>
<dbReference type="GO" id="GO:0003700">
    <property type="term" value="F:DNA-binding transcription factor activity"/>
    <property type="evidence" value="ECO:0000315"/>
    <property type="project" value="EcoCyc"/>
</dbReference>
<dbReference type="GO" id="GO:0043565">
    <property type="term" value="F:sequence-specific DNA binding"/>
    <property type="evidence" value="ECO:0007669"/>
    <property type="project" value="InterPro"/>
</dbReference>
<dbReference type="GO" id="GO:0045893">
    <property type="term" value="P:positive regulation of DNA-templated transcription"/>
    <property type="evidence" value="ECO:0007669"/>
    <property type="project" value="UniProtKB-UniRule"/>
</dbReference>
<dbReference type="GO" id="GO:0006355">
    <property type="term" value="P:regulation of DNA-templated transcription"/>
    <property type="evidence" value="ECO:0000315"/>
    <property type="project" value="EcoCyc"/>
</dbReference>
<dbReference type="GO" id="GO:0019299">
    <property type="term" value="P:rhamnose metabolic process"/>
    <property type="evidence" value="ECO:0007669"/>
    <property type="project" value="UniProtKB-UniRule"/>
</dbReference>
<dbReference type="CDD" id="cd06977">
    <property type="entry name" value="cupin_RhaR_RhaS-like_N"/>
    <property type="match status" value="1"/>
</dbReference>
<dbReference type="FunFam" id="1.10.10.60:FF:000181">
    <property type="entry name" value="HTH-type transcriptional activator RhaS"/>
    <property type="match status" value="1"/>
</dbReference>
<dbReference type="FunFam" id="2.60.120.10:FF:000041">
    <property type="entry name" value="HTH-type transcriptional activator RhaS"/>
    <property type="match status" value="1"/>
</dbReference>
<dbReference type="Gene3D" id="1.10.10.60">
    <property type="entry name" value="Homeodomain-like"/>
    <property type="match status" value="1"/>
</dbReference>
<dbReference type="Gene3D" id="2.60.120.10">
    <property type="entry name" value="Jelly Rolls"/>
    <property type="match status" value="1"/>
</dbReference>
<dbReference type="HAMAP" id="MF_01534">
    <property type="entry name" value="HTH_type_RhaS"/>
    <property type="match status" value="1"/>
</dbReference>
<dbReference type="InterPro" id="IPR003313">
    <property type="entry name" value="AraC-bd"/>
</dbReference>
<dbReference type="InterPro" id="IPR050204">
    <property type="entry name" value="AraC_XylS_family_regulators"/>
</dbReference>
<dbReference type="InterPro" id="IPR009057">
    <property type="entry name" value="Homeodomain-like_sf"/>
</dbReference>
<dbReference type="InterPro" id="IPR037923">
    <property type="entry name" value="HTH-like"/>
</dbReference>
<dbReference type="InterPro" id="IPR018060">
    <property type="entry name" value="HTH_AraC"/>
</dbReference>
<dbReference type="InterPro" id="IPR018062">
    <property type="entry name" value="HTH_AraC-typ_CS"/>
</dbReference>
<dbReference type="InterPro" id="IPR047220">
    <property type="entry name" value="RhaR_RhaS-like_N"/>
</dbReference>
<dbReference type="InterPro" id="IPR014710">
    <property type="entry name" value="RmlC-like_jellyroll"/>
</dbReference>
<dbReference type="InterPro" id="IPR020449">
    <property type="entry name" value="Tscrpt_reg_AraC-type_HTH"/>
</dbReference>
<dbReference type="InterPro" id="IPR023609">
    <property type="entry name" value="Tscrpt_reg_HTH_RhaS"/>
</dbReference>
<dbReference type="NCBIfam" id="NF010028">
    <property type="entry name" value="PRK13503.1"/>
    <property type="match status" value="1"/>
</dbReference>
<dbReference type="PANTHER" id="PTHR46796:SF13">
    <property type="entry name" value="HTH-TYPE TRANSCRIPTIONAL ACTIVATOR RHAS"/>
    <property type="match status" value="1"/>
</dbReference>
<dbReference type="PANTHER" id="PTHR46796">
    <property type="entry name" value="HTH-TYPE TRANSCRIPTIONAL ACTIVATOR RHAS-RELATED"/>
    <property type="match status" value="1"/>
</dbReference>
<dbReference type="Pfam" id="PF02311">
    <property type="entry name" value="AraC_binding"/>
    <property type="match status" value="1"/>
</dbReference>
<dbReference type="Pfam" id="PF12833">
    <property type="entry name" value="HTH_18"/>
    <property type="match status" value="1"/>
</dbReference>
<dbReference type="PRINTS" id="PR00032">
    <property type="entry name" value="HTHARAC"/>
</dbReference>
<dbReference type="SMART" id="SM00342">
    <property type="entry name" value="HTH_ARAC"/>
    <property type="match status" value="1"/>
</dbReference>
<dbReference type="SUPFAM" id="SSF46689">
    <property type="entry name" value="Homeodomain-like"/>
    <property type="match status" value="2"/>
</dbReference>
<dbReference type="SUPFAM" id="SSF51215">
    <property type="entry name" value="Regulatory protein AraC"/>
    <property type="match status" value="1"/>
</dbReference>
<dbReference type="PROSITE" id="PS00041">
    <property type="entry name" value="HTH_ARAC_FAMILY_1"/>
    <property type="match status" value="1"/>
</dbReference>
<dbReference type="PROSITE" id="PS01124">
    <property type="entry name" value="HTH_ARAC_FAMILY_2"/>
    <property type="match status" value="1"/>
</dbReference>
<organism>
    <name type="scientific">Escherichia coli (strain K12)</name>
    <dbReference type="NCBI Taxonomy" id="83333"/>
    <lineage>
        <taxon>Bacteria</taxon>
        <taxon>Pseudomonadati</taxon>
        <taxon>Pseudomonadota</taxon>
        <taxon>Gammaproteobacteria</taxon>
        <taxon>Enterobacterales</taxon>
        <taxon>Enterobacteriaceae</taxon>
        <taxon>Escherichia</taxon>
    </lineage>
</organism>